<dbReference type="EMBL" id="M37891">
    <property type="protein sequence ID" value="AAB61148.1"/>
    <property type="molecule type" value="Genomic_DNA"/>
</dbReference>
<dbReference type="EMBL" id="X14375">
    <property type="protein sequence ID" value="CAA32549.1"/>
    <property type="molecule type" value="Genomic_DNA"/>
</dbReference>
<dbReference type="EMBL" id="AE006468">
    <property type="protein sequence ID" value="AAL20669.1"/>
    <property type="molecule type" value="Genomic_DNA"/>
</dbReference>
<dbReference type="PIR" id="S10155">
    <property type="entry name" value="S10155"/>
</dbReference>
<dbReference type="RefSeq" id="NP_460710.1">
    <property type="nucleotide sequence ID" value="NC_003197.2"/>
</dbReference>
<dbReference type="RefSeq" id="WP_001287383.1">
    <property type="nucleotide sequence ID" value="NC_003197.2"/>
</dbReference>
<dbReference type="PDB" id="2L93">
    <property type="method" value="NMR"/>
    <property type="chains" value="A=91-137"/>
</dbReference>
<dbReference type="PDB" id="3NR7">
    <property type="method" value="X-ray"/>
    <property type="resolution" value="3.70 A"/>
    <property type="chains" value="A/B=1-83"/>
</dbReference>
<dbReference type="PDB" id="4ICG">
    <property type="method" value="X-ray"/>
    <property type="resolution" value="2.92 A"/>
    <property type="chains" value="A/B=3-46"/>
</dbReference>
<dbReference type="PDBsum" id="2L93"/>
<dbReference type="PDBsum" id="3NR7"/>
<dbReference type="PDBsum" id="4ICG"/>
<dbReference type="BMRB" id="P0A1S2"/>
<dbReference type="SMR" id="P0A1S2"/>
<dbReference type="DIP" id="DIP-59374N"/>
<dbReference type="STRING" id="99287.STM1751"/>
<dbReference type="PaxDb" id="99287-STM1751"/>
<dbReference type="GeneID" id="1253270"/>
<dbReference type="GeneID" id="66756227"/>
<dbReference type="KEGG" id="stm:STM1751"/>
<dbReference type="PATRIC" id="fig|99287.12.peg.1847"/>
<dbReference type="HOGENOM" id="CLU_117503_0_0_6"/>
<dbReference type="OMA" id="NGVEKTW"/>
<dbReference type="PhylomeDB" id="P0A1S2"/>
<dbReference type="BioCyc" id="SENT99287:STM1751-MONOMER"/>
<dbReference type="EvolutionaryTrace" id="P0A1S2"/>
<dbReference type="Proteomes" id="UP000001014">
    <property type="component" value="Chromosome"/>
</dbReference>
<dbReference type="GO" id="GO:0005829">
    <property type="term" value="C:cytosol"/>
    <property type="evidence" value="ECO:0000318"/>
    <property type="project" value="GO_Central"/>
</dbReference>
<dbReference type="GO" id="GO:0009295">
    <property type="term" value="C:nucleoid"/>
    <property type="evidence" value="ECO:0007669"/>
    <property type="project" value="UniProtKB-SubCell"/>
</dbReference>
<dbReference type="GO" id="GO:0032993">
    <property type="term" value="C:protein-DNA complex"/>
    <property type="evidence" value="ECO:0000318"/>
    <property type="project" value="GO_Central"/>
</dbReference>
<dbReference type="GO" id="GO:0003681">
    <property type="term" value="F:bent DNA binding"/>
    <property type="evidence" value="ECO:0000314"/>
    <property type="project" value="UniProtKB"/>
</dbReference>
<dbReference type="GO" id="GO:0003677">
    <property type="term" value="F:DNA binding"/>
    <property type="evidence" value="ECO:0000314"/>
    <property type="project" value="UniProtKB"/>
</dbReference>
<dbReference type="GO" id="GO:0001217">
    <property type="term" value="F:DNA-binding transcription repressor activity"/>
    <property type="evidence" value="ECO:0000315"/>
    <property type="project" value="UniProtKB"/>
</dbReference>
<dbReference type="GO" id="GO:0042802">
    <property type="term" value="F:identical protein binding"/>
    <property type="evidence" value="ECO:0000353"/>
    <property type="project" value="IntAct"/>
</dbReference>
<dbReference type="GO" id="GO:0003680">
    <property type="term" value="F:minor groove of adenine-thymine-rich DNA binding"/>
    <property type="evidence" value="ECO:0000314"/>
    <property type="project" value="UniProtKB"/>
</dbReference>
<dbReference type="GO" id="GO:0046983">
    <property type="term" value="F:protein dimerization activity"/>
    <property type="evidence" value="ECO:0007669"/>
    <property type="project" value="InterPro"/>
</dbReference>
<dbReference type="GO" id="GO:0030527">
    <property type="term" value="F:structural constituent of chromatin"/>
    <property type="evidence" value="ECO:0007669"/>
    <property type="project" value="InterPro"/>
</dbReference>
<dbReference type="GO" id="GO:0000976">
    <property type="term" value="F:transcription cis-regulatory region binding"/>
    <property type="evidence" value="ECO:0000318"/>
    <property type="project" value="GO_Central"/>
</dbReference>
<dbReference type="GO" id="GO:0045892">
    <property type="term" value="P:negative regulation of DNA-templated transcription"/>
    <property type="evidence" value="ECO:0000315"/>
    <property type="project" value="UniProtKB"/>
</dbReference>
<dbReference type="GO" id="GO:0045814">
    <property type="term" value="P:negative regulation of gene expression, epigenetic"/>
    <property type="evidence" value="ECO:0000314"/>
    <property type="project" value="UniProtKB"/>
</dbReference>
<dbReference type="FunFam" id="1.10.287.1050:FF:000001">
    <property type="entry name" value="DNA-binding protein"/>
    <property type="match status" value="1"/>
</dbReference>
<dbReference type="FunFam" id="4.10.430.10:FF:000001">
    <property type="entry name" value="DNA-binding protein"/>
    <property type="match status" value="1"/>
</dbReference>
<dbReference type="Gene3D" id="1.10.287.1050">
    <property type="entry name" value="H-NS histone-like proteins"/>
    <property type="match status" value="1"/>
</dbReference>
<dbReference type="Gene3D" id="4.10.430.10">
    <property type="entry name" value="Histone-like protein H-NS, C-terminal domain"/>
    <property type="match status" value="1"/>
</dbReference>
<dbReference type="InterPro" id="IPR054180">
    <property type="entry name" value="H-NS-like_N"/>
</dbReference>
<dbReference type="InterPro" id="IPR027444">
    <property type="entry name" value="H-NS_C_dom"/>
</dbReference>
<dbReference type="InterPro" id="IPR037150">
    <property type="entry name" value="H-NS_C_dom_sf"/>
</dbReference>
<dbReference type="InterPro" id="IPR001801">
    <property type="entry name" value="Histone_HNS"/>
</dbReference>
<dbReference type="InterPro" id="IPR027454">
    <property type="entry name" value="Histone_HNS_N"/>
</dbReference>
<dbReference type="NCBIfam" id="NF008193">
    <property type="entry name" value="PRK10947.1"/>
    <property type="match status" value="1"/>
</dbReference>
<dbReference type="PANTHER" id="PTHR38097">
    <property type="match status" value="1"/>
</dbReference>
<dbReference type="PANTHER" id="PTHR38097:SF1">
    <property type="entry name" value="DNA-BINDING PROTEIN H-NS"/>
    <property type="match status" value="1"/>
</dbReference>
<dbReference type="Pfam" id="PF00816">
    <property type="entry name" value="Histone_HNS"/>
    <property type="match status" value="1"/>
</dbReference>
<dbReference type="Pfam" id="PF22470">
    <property type="entry name" value="Histone_HNS_N"/>
    <property type="match status" value="1"/>
</dbReference>
<dbReference type="PIRSF" id="PIRSF002096">
    <property type="entry name" value="HnS"/>
    <property type="match status" value="1"/>
</dbReference>
<dbReference type="SMART" id="SM00528">
    <property type="entry name" value="HNS"/>
    <property type="match status" value="1"/>
</dbReference>
<dbReference type="SUPFAM" id="SSF81273">
    <property type="entry name" value="H-NS histone-like proteins"/>
    <property type="match status" value="2"/>
</dbReference>
<evidence type="ECO:0000250" key="1"/>
<evidence type="ECO:0000250" key="2">
    <source>
        <dbReference type="UniProtKB" id="P0ACF8"/>
    </source>
</evidence>
<evidence type="ECO:0000269" key="3">
    <source>
    </source>
</evidence>
<evidence type="ECO:0000269" key="4">
    <source>
    </source>
</evidence>
<evidence type="ECO:0000269" key="5">
    <source>
    </source>
</evidence>
<evidence type="ECO:0000269" key="6">
    <source>
    </source>
</evidence>
<evidence type="ECO:0000269" key="7">
    <source>
    </source>
</evidence>
<evidence type="ECO:0000269" key="8">
    <source>
    </source>
</evidence>
<evidence type="ECO:0000269" key="9">
    <source>
    </source>
</evidence>
<evidence type="ECO:0000269" key="10">
    <source>
    </source>
</evidence>
<evidence type="ECO:0000269" key="11">
    <source>
    </source>
</evidence>
<evidence type="ECO:0000269" key="12">
    <source>
    </source>
</evidence>
<evidence type="ECO:0000303" key="13">
    <source>
    </source>
</evidence>
<evidence type="ECO:0000303" key="14">
    <source>
    </source>
</evidence>
<evidence type="ECO:0000303" key="15">
    <source>
    </source>
</evidence>
<evidence type="ECO:0000303" key="16">
    <source>
    </source>
</evidence>
<evidence type="ECO:0000305" key="17"/>
<evidence type="ECO:0000305" key="18">
    <source>
    </source>
</evidence>
<evidence type="ECO:0007829" key="19">
    <source>
        <dbReference type="PDB" id="2L93"/>
    </source>
</evidence>
<evidence type="ECO:0007829" key="20">
    <source>
        <dbReference type="PDB" id="4ICG"/>
    </source>
</evidence>
<comment type="function">
    <text evidence="2 3 5 6 7 9 10 12">Acts as a global transcriptional repressor and binds to the minor groove of AT-rich DNA (PubMed:10844682, PubMed:1423593, PubMed:16933988, PubMed:17630976, PubMed:21059643, PubMed:21673140). Silences genes by altering DNA topology; in magnesium concentrations equivalent to inside Salmonella-containing vacuoles (SCV) it forms rigid and elongated filaments on the DNA, and in higher magnesium conditions it causes DNA bridging/folding (PubMed:1423593, PubMed:21059643, PubMed:26880544). Has a strong preference for DNA that has been recently acquired by horizontal gene transfer, binding strongly to Salmonella pathogenicity islands 1 and 2 (SPI1 and SPI2); this offers the selective advantage of silencing foreign DNA while keeping it in the genome in case of need (PubMed:16933988, PubMed:21059643). Represses the expression of master biofilm regulator csgD (PubMed:26880544). Binds 746 genes, about half of which show no change in expression in disruption experiments suggesting these sites are important for nucleoid structure (PubMed:16933988). For the proU locus (the proV-proW-proX operon) inhibits transcription at low osmolarity by binding to AT-rich, curved, DNA downstream of the transcription start site of proV; repression is greater when more than 1 curved DNA sequence is present (PubMed:1423593). It plays a role in the thermal control of pili production (By similarity). It is subject to transcriptional auto-repression (By similarity). It binds preferentially to the upstream region of its own gene recognizing two segments of DNA on both sides of a bend centered around -150 (By similarity). Binds tightly to dsDNA (PubMed:10844682).</text>
</comment>
<comment type="subunit">
    <text evidence="2 3 8 11">Forms oligomers of increasing size with increasing protein concentration (PubMed:10844682, PubMed:23515315). The fragment of 1-83 probably forms oligomers of 4 dimeric units at 10 degrees Celsius, at 40 degrees Celsius only dimers are formed (PubMed:20798056). Binds Hha and YdgT (also known as cnu); crystal structures suggest each H-NS dimer could bind 2 Hha monomers on opposites sides (PubMed:23515315). Probably also binds StpA (By similarity).</text>
</comment>
<comment type="interaction">
    <interactant intactId="EBI-15873459">
        <id>P0A1S2</id>
    </interactant>
    <interactant intactId="EBI-15873459">
        <id>P0A1S2</id>
        <label>hns</label>
    </interactant>
    <organismsDiffer>false</organismsDiffer>
    <experiments>2</experiments>
</comment>
<comment type="subcellular location">
    <subcellularLocation>
        <location evidence="2">Cytoplasm</location>
        <location evidence="2">Nucleoid</location>
    </subcellularLocation>
</comment>
<comment type="domain">
    <text evidence="3 4 11">Composed of 2 domains (approximately residues 1-64 and 89-136) joined by a flexible linker. The isolated N-terminus (1-64) forms a trimer, probably via coiled-coil interactions (PubMed:10844682, PubMed:11237622). The isolated N-terminus plus linker fragment (residues 1-89) forms homooligomers of increasing size with increasing protein concentration, while the isolated C-terminus fragment is a monomer (PubMed:10844682). A shorter fragment (residues 1-46) interacts with Hha (PubMed:23515315).</text>
</comment>
<comment type="disruption phenotype">
    <text evidence="5 6 7 9">Loss of osmotic regulation of the proU locus, loss of changes in plasmid linking number (PubMed:1423593). 2X decreased growth rate, which is partially restored by a mutation preventing expression of SPI2, increased expression of about half of the genes to which H-NS binds (PubMed:16933988). Note strain LT2 has point mutation in rpoS which decreases its translation efficiency, in the presence of wild-type rpoS, deletion of hns is lethal (PubMed:16933988). Leads to the expression of genes encoding virulence proteins in normally non-inducing conditions (PubMed:17630976, PubMed:21059643).</text>
</comment>
<comment type="similarity">
    <text evidence="17">Belongs to the histone-like protein H-NS family.</text>
</comment>
<feature type="initiator methionine" description="Removed" evidence="2">
    <location>
        <position position="1"/>
    </location>
</feature>
<feature type="chain" id="PRO_0000168510" description="DNA-binding protein H-NS">
    <location>
        <begin position="2"/>
        <end position="137"/>
    </location>
</feature>
<feature type="DNA-binding region" evidence="10">
    <location>
        <begin position="112"/>
        <end position="117"/>
    </location>
</feature>
<feature type="region of interest" description="Responsible for protein oligomerization" evidence="3">
    <location>
        <begin position="2"/>
        <end position="64"/>
    </location>
</feature>
<feature type="coiled-coil region" evidence="4 18">
    <location>
        <begin position="22"/>
        <end position="55"/>
    </location>
</feature>
<feature type="site" description="Interacts with Hha" evidence="1">
    <location>
        <position position="12"/>
    </location>
</feature>
<feature type="mutagenesis site" description="No longer binds Hha or YdgT, slightly altered DNA-binding, wild-type self-association. Derepression of some H-NS-regulated genes, acts similarly to an hha deletion strain." evidence="11">
    <original>I</original>
    <variation>A</variation>
    <location>
        <position position="11"/>
    </location>
</feature>
<feature type="mutagenesis site" description="No longer binds Hha, still able to bind YdgT." evidence="11">
    <original>R</original>
    <variation>A</variation>
    <location>
        <position position="12"/>
    </location>
</feature>
<feature type="mutagenesis site" description="No longer binds Hha or YdgT, slightly altered DNA-binding, may self associate into longer than wild-type filaments. Derepression." evidence="11">
    <original>R</original>
    <variation>H</variation>
    <location>
        <position position="12"/>
    </location>
</feature>
<feature type="mutagenesis site" description="No effect on DNA-binding or physical properties." evidence="3">
    <original>C</original>
    <variation>S</variation>
    <location>
        <position position="21"/>
    </location>
</feature>
<feature type="mutagenesis site" description="No change in DNA-binding, in fragment 91-137." evidence="10">
    <original>E</original>
    <variation>A</variation>
    <location>
        <position position="102"/>
    </location>
</feature>
<feature type="mutagenesis site" description="Loss of DNA-binding, in fragment 91-137." evidence="10">
    <original>QGR</original>
    <variation>AGA</variation>
    <location>
        <begin position="112"/>
        <end position="114"/>
    </location>
</feature>
<feature type="mutagenesis site" description="Reduced DNA-binding, in fragment 91-137." evidence="10">
    <original>Q</original>
    <variation>A</variation>
    <location>
        <position position="112"/>
    </location>
</feature>
<feature type="mutagenesis site" description="Considerably reduced DNA-binding, in fragment 91-137." evidence="10">
    <original>R</original>
    <variation>A</variation>
    <location>
        <position position="114"/>
    </location>
</feature>
<feature type="helix" evidence="20">
    <location>
        <begin position="6"/>
        <end position="8"/>
    </location>
</feature>
<feature type="helix" evidence="20">
    <location>
        <begin position="11"/>
        <end position="19"/>
    </location>
</feature>
<feature type="helix" evidence="20">
    <location>
        <begin position="23"/>
        <end position="43"/>
    </location>
</feature>
<feature type="strand" evidence="19">
    <location>
        <begin position="96"/>
        <end position="109"/>
    </location>
</feature>
<feature type="helix" evidence="19">
    <location>
        <begin position="117"/>
        <end position="125"/>
    </location>
</feature>
<feature type="helix" evidence="19">
    <location>
        <begin position="130"/>
        <end position="132"/>
    </location>
</feature>
<keyword id="KW-0002">3D-structure</keyword>
<keyword id="KW-0175">Coiled coil</keyword>
<keyword id="KW-0963">Cytoplasm</keyword>
<keyword id="KW-0238">DNA-binding</keyword>
<keyword id="KW-1185">Reference proteome</keyword>
<keyword id="KW-0678">Repressor</keyword>
<keyword id="KW-0804">Transcription</keyword>
<keyword id="KW-0805">Transcription regulation</keyword>
<gene>
    <name type="primary">hns</name>
    <name type="synonym">hnsA</name>
    <name evidence="15" type="synonym">osmZ</name>
    <name type="ordered locus">STM1751</name>
</gene>
<protein>
    <recommendedName>
        <fullName evidence="15">DNA-binding protein H-NS</fullName>
    </recommendedName>
    <alternativeName>
        <fullName>Histone-like protein HLP-II</fullName>
    </alternativeName>
    <alternativeName>
        <fullName>Protein B1</fullName>
    </alternativeName>
    <alternativeName>
        <fullName evidence="15">Protein H1</fullName>
    </alternativeName>
</protein>
<proteinExistence type="evidence at protein level"/>
<reference key="1">
    <citation type="journal article" date="1990" name="Nucleic Acids Res.">
        <title>Nucleotide sequence of hns encoding the DNA-binding protein H-NS of Salmonella typhimurium.</title>
        <authorList>
            <person name="Marsh M."/>
            <person name="Hillyard D.R."/>
        </authorList>
    </citation>
    <scope>NUCLEOTIDE SEQUENCE [GENOMIC DNA]</scope>
    <source>
        <strain>LT2</strain>
    </source>
</reference>
<reference key="2">
    <citation type="journal article" date="1990" name="Cell">
        <title>Histone-like protein H1 (H-NS), DNA supercoiling, and gene expression in bacteria.</title>
        <authorList>
            <person name="Hulton C.S.J."/>
            <person name="Seirafi A."/>
            <person name="Hinton J.C.D."/>
            <person name="Sidebotham J.M."/>
            <person name="Waddell L."/>
            <person name="Pavitt G.D."/>
            <person name="Owen-Hughes T."/>
            <person name="Spassky A."/>
            <person name="Buc H."/>
            <person name="Higgins C.F."/>
        </authorList>
    </citation>
    <scope>NUCLEOTIDE SEQUENCE [GENOMIC DNA]</scope>
    <source>
        <strain>LT2</strain>
    </source>
</reference>
<reference key="3">
    <citation type="journal article" date="2001" name="Nature">
        <title>Complete genome sequence of Salmonella enterica serovar Typhimurium LT2.</title>
        <authorList>
            <person name="McClelland M."/>
            <person name="Sanderson K.E."/>
            <person name="Spieth J."/>
            <person name="Clifton S.W."/>
            <person name="Latreille P."/>
            <person name="Courtney L."/>
            <person name="Porwollik S."/>
            <person name="Ali J."/>
            <person name="Dante M."/>
            <person name="Du F."/>
            <person name="Hou S."/>
            <person name="Layman D."/>
            <person name="Leonard S."/>
            <person name="Nguyen C."/>
            <person name="Scott K."/>
            <person name="Holmes A."/>
            <person name="Grewal N."/>
            <person name="Mulvaney E."/>
            <person name="Ryan E."/>
            <person name="Sun H."/>
            <person name="Florea L."/>
            <person name="Miller W."/>
            <person name="Stoneking T."/>
            <person name="Nhan M."/>
            <person name="Waterston R."/>
            <person name="Wilson R.K."/>
        </authorList>
    </citation>
    <scope>NUCLEOTIDE SEQUENCE [LARGE SCALE GENOMIC DNA]</scope>
    <source>
        <strain>LT2 / SGSC1412 / ATCC 700720</strain>
    </source>
</reference>
<reference key="4">
    <citation type="journal article" date="1992" name="Cell">
        <title>The chromatin-associated protein H-NS interacts with curved DNA to influence DNA topology and gene expression.</title>
        <authorList>
            <person name="Owen-Hughes T.A."/>
            <person name="Pavitt G.D."/>
            <person name="Santos D.S."/>
            <person name="Sidebotham J.M."/>
            <person name="Hulton C.S."/>
            <person name="Hinton J.C."/>
            <person name="Higgins C.F."/>
        </authorList>
    </citation>
    <scope>FUNCTION</scope>
    <scope>DISRUPTION PHENOTYPE</scope>
    <scope>DNA-BINDING</scope>
    <source>
        <strain>LT2 / SGSC1412 / ATCC 700720</strain>
    </source>
</reference>
<reference key="5">
    <citation type="journal article" date="2000" name="Mol. Microbiol.">
        <title>Oligomerization of the chromatin-structuring protein H-NS.</title>
        <authorList>
            <person name="Smyth C.P."/>
            <person name="Lundbaeck T."/>
            <person name="Renzoni D."/>
            <person name="Siligardi G."/>
            <person name="Beavil R."/>
            <person name="Layton M."/>
            <person name="Sidebotham J.M."/>
            <person name="Hinton J.C."/>
            <person name="Driscoll P.C."/>
            <person name="Higgins C.F."/>
            <person name="Ladbury J.E."/>
        </authorList>
    </citation>
    <scope>FUNCTION</scope>
    <scope>SUBUNIT</scope>
    <scope>DOMAIN</scope>
    <scope>MUTAGENESIS OF CYS-21</scope>
    <scope>COILED COIL</scope>
    <scope>DNA-BINDING</scope>
</reference>
<reference key="6">
    <citation type="journal article" date="2006" name="PLoS Pathog.">
        <title>H-NS mediates the silencing of laterally acquired genes in bacteria.</title>
        <authorList>
            <person name="Lucchini S."/>
            <person name="Rowley G."/>
            <person name="Goldberg M.D."/>
            <person name="Hurd D."/>
            <person name="Harrison M."/>
            <person name="Hinton J.C."/>
        </authorList>
    </citation>
    <scope>FUNCTION IN SILENCING FOREIGN AT-RICH DNA</scope>
    <scope>REGULON</scope>
    <scope>DISRUPTION PHENOTYPE</scope>
    <scope>DNA-BINDING</scope>
    <source>
        <strain>LT2 / SGSC1412 / ATCC 700720</strain>
    </source>
</reference>
<reference key="7">
    <citation type="journal article" date="2007" name="Mol. Microbiol.">
        <title>The response regulator SsrB activates expression of diverse Salmonella pathogenicity island 2 promoters and counters silencing by the nucleoid-associated protein H-NS.</title>
        <authorList>
            <person name="Walthers D."/>
            <person name="Carroll R.K."/>
            <person name="Navarre W.W."/>
            <person name="Libby S.J."/>
            <person name="Fang F.C."/>
            <person name="Kenney L.J."/>
        </authorList>
    </citation>
    <scope>FUNCTION</scope>
    <scope>DISRUPTION PHENOTYPE</scope>
    <source>
        <strain evidence="13">14028s / SGSC 2262</strain>
    </source>
</reference>
<reference key="8">
    <citation type="journal article" date="2011" name="J. Biol. Chem.">
        <title>Salmonella enterica response regulator SsrB relieves H-NS silencing by displacing H-NS bound in polymerization mode and directly activates transcription.</title>
        <authorList>
            <person name="Walthers D."/>
            <person name="Li Y."/>
            <person name="Liu Y."/>
            <person name="Anand G."/>
            <person name="Yan J."/>
            <person name="Kenney L.J."/>
        </authorList>
    </citation>
    <scope>FUNCTION</scope>
    <scope>DISRUPTION PHENOTYPE</scope>
    <source>
        <strain evidence="14">14028s / SGSC 2262</strain>
    </source>
</reference>
<reference key="9">
    <citation type="journal article" date="2016" name="Elife">
        <title>The horizontally-acquired response regulator SsrB drives a Salmonella lifestyle switch by relieving biofilm silencing.</title>
        <authorList>
            <person name="Desai S.K."/>
            <person name="Winardhi R.S."/>
            <person name="Periasamy S."/>
            <person name="Dykas M.M."/>
            <person name="Jie Y."/>
            <person name="Kenney L.J."/>
        </authorList>
    </citation>
    <scope>FUNCTION</scope>
    <source>
        <strain evidence="16">14028s / SGSC 2262</strain>
    </source>
</reference>
<reference key="10">
    <citation type="journal article" date="2001" name="J. Mol. Biol.">
        <title>Structural characterization of the N-terminal oligomerization domain of the bacterial chromatin-structuring protein, H-NS.</title>
        <authorList>
            <person name="Renzoni D."/>
            <person name="Esposito D."/>
            <person name="Pfuhl M."/>
            <person name="Hinton J.C."/>
            <person name="Higgins C.F."/>
            <person name="Driscoll P.C."/>
            <person name="Ladbury J.E."/>
        </authorList>
    </citation>
    <scope>STRUCTURE BY NMR OF 1-64</scope>
    <scope>DOMAIN</scope>
    <scope>COILED COIL</scope>
</reference>
<reference key="11">
    <citation type="journal article" date="2010" name="Proc. Natl. Acad. Sci. U.S.A.">
        <title>H-NS forms a superhelical protein scaffold for DNA condensation.</title>
        <authorList>
            <person name="Arold S.T."/>
            <person name="Leonard P.G."/>
            <person name="Parkinson G.N."/>
            <person name="Ladbury J.E."/>
        </authorList>
    </citation>
    <scope>X-RAY CRYSTALLOGRAPHY (3.70 ANGSTROMS) OF 1-83</scope>
    <scope>POSSIBLE MODE OF DNA PACKING</scope>
    <scope>SUBUNIT</scope>
</reference>
<reference key="12">
    <citation type="journal article" date="2011" name="Proc. Natl. Acad. Sci. U.S.A.">
        <title>Structural basis for recognition of AT-rich DNA by unrelated xenogeneic silencing proteins.</title>
        <authorList>
            <person name="Gordon B.R."/>
            <person name="Li Y."/>
            <person name="Cote A."/>
            <person name="Weirauch M.T."/>
            <person name="Ding P."/>
            <person name="Hughes T.R."/>
            <person name="Navarre W.W."/>
            <person name="Xia B."/>
            <person name="Liu J."/>
        </authorList>
    </citation>
    <scope>STRUCTURE BY NMR OF 91-137</scope>
    <scope>FUNCTION</scope>
    <scope>DNA-BINDING</scope>
    <scope>MUTAGENESIS OF GLU-102; 112-GLN--ARG-114; GLN-112 AND ARG-114</scope>
</reference>
<reference key="13">
    <citation type="journal article" date="2013" name="J. Biol. Chem.">
        <title>Structural insights into the regulation of foreign genes in Salmonella by the Hha/H-NS complex.</title>
        <authorList>
            <person name="Ali S.S."/>
            <person name="Whitney J.C."/>
            <person name="Stevenson J."/>
            <person name="Robinson H."/>
            <person name="Howell P.L."/>
            <person name="Navarre W.W."/>
        </authorList>
    </citation>
    <scope>X-RAY CRYSTALLOGRAPHY (2.92 ANGSTROMS) OF 3-46 IN COMPLEX WITH HHA</scope>
    <scope>SUBUNIT</scope>
    <scope>DOMAIN</scope>
    <scope>DISRUPTION PHENOTYPE</scope>
    <scope>DNA-BINDING</scope>
    <scope>MUTAGENESIS OF ILE-11 AND ARG-12</scope>
    <source>
        <strain>LT2 / SGSC1412 / ATCC 700720</strain>
    </source>
</reference>
<reference key="14">
    <citation type="journal article" date="2015" name="Curr. Opin. Microbiol.">
        <title>H-NS and RNA polymerase: a love-hate relationship?</title>
        <authorList>
            <person name="Landick R."/>
            <person name="Wade J.T."/>
            <person name="Grainger D.C."/>
        </authorList>
    </citation>
    <scope>REVIEW</scope>
</reference>
<organism>
    <name type="scientific">Salmonella typhimurium (strain LT2 / SGSC1412 / ATCC 700720)</name>
    <dbReference type="NCBI Taxonomy" id="99287"/>
    <lineage>
        <taxon>Bacteria</taxon>
        <taxon>Pseudomonadati</taxon>
        <taxon>Pseudomonadota</taxon>
        <taxon>Gammaproteobacteria</taxon>
        <taxon>Enterobacterales</taxon>
        <taxon>Enterobacteriaceae</taxon>
        <taxon>Salmonella</taxon>
    </lineage>
</organism>
<sequence length="137" mass="15543">MSEALKILNNIRTLRAQARECTLETLEEMLEKLEVVVNERREEESAAAAEVEERTRKLQQYREMLIADGIDPNELLNSMAAAKSGTKAKRAARPAKYSYVDENGETKTWTGQGRTPAVIKKAMEEQGKQLEDFLIKE</sequence>
<accession>P0A1S2</accession>
<accession>P17428</accession>
<name>HNS_SALTY</name>